<reference key="1">
    <citation type="journal article" date="2009" name="J. Bacteriol.">
        <title>Complete and draft genome sequences of six members of the Aquificales.</title>
        <authorList>
            <person name="Reysenbach A.-L."/>
            <person name="Hamamura N."/>
            <person name="Podar M."/>
            <person name="Griffiths E."/>
            <person name="Ferreira S."/>
            <person name="Hochstein R."/>
            <person name="Heidelberg J."/>
            <person name="Johnson J."/>
            <person name="Mead D."/>
            <person name="Pohorille A."/>
            <person name="Sarmiento M."/>
            <person name="Schweighofer K."/>
            <person name="Seshadri R."/>
            <person name="Voytek M.A."/>
        </authorList>
    </citation>
    <scope>NUCLEOTIDE SEQUENCE [LARGE SCALE GENOMIC DNA]</scope>
    <source>
        <strain>Y04AAS1</strain>
    </source>
</reference>
<keyword id="KW-0997">Cell inner membrane</keyword>
<keyword id="KW-1003">Cell membrane</keyword>
<keyword id="KW-0472">Membrane</keyword>
<keyword id="KW-0479">Metal-binding</keyword>
<keyword id="KW-0813">Transport</keyword>
<keyword id="KW-0862">Zinc</keyword>
<evidence type="ECO:0000255" key="1">
    <source>
        <dbReference type="HAMAP-Rule" id="MF_01871"/>
    </source>
</evidence>
<sequence>MVKAYLDNVRKYIPHYWPMTTFVHHNPLHGFEDMPFKEALKQASKLYKAKVYMDPDYYVELYKEGIIKRDILEKNLFEFLKSIGLQMYFAESKKFITEISQDWKYYKVKSSTTPDINLIDYFNQKIVKDEDTLFQELIEDMMLSEILDAILEDNTTDIIEKEILEFVARFLDEGQTTMSMPEREKGMFGAFKLYEGLNTSLNEEEYADTILHELSPKNVERYILNHLLKDFGWAAFIKYREDNEDYYFQQIHPASLLEYLAVRLHYEKKYLNHYPISNFVELQKAFEQNKTLFVLKLLKAKNILPSKYIDRLEEKDSPKAILSDYLSEEVFLEAYRIQNIANELLLHLDKQKDITDFAFLIEKLKEEEGYIWLKSLEDSYIKEYTIDFLQSNEKIQRDILASAVFCIDVRSEAIRRHIERLGNYNTYGVAGFFGTPIAFIEFDKGHEQYLCPALIKPQKIIFELPEDEHHDYKTKHNINYTFKKTLESLKNNPYTPFFMVEAMGWLFGVNLFGKTLFPDFTLKILSFIKAKKPKTRFTIDKLSQEEIEFYAQKFFIQKIQEAYHQEFKKHINDKKAKDLFEAIINENHKGIDERILEILKTKYNINKESFELEKIRLSNVGYTEEEQIKLVENFLKLIGLTENIPKFVLLIAHGSTSDNNPFESALDCGACGGNNGLPNVRILASIANRNQIRKGLEKVGIKIPEDTIFIPGIHNTTTDEITFYDTEVMPQKDRALFDKIVKDFKIASQKTREERAKTLPYAGSGDRIPVRAIDWSETRPEWGLSKNMGVYVGKRSSTQNIALKNRFFMQSYTWEIDKDNKILKNILSGPFIIGEWINMEHYFSTTDNERLGAGSKVYHNVVAKVGVWTGNYGDLRTGLPYQTVYHDGVPYHEPIRLLTFIEAPAEKVLEAAQEVKEALKLVVNEWVRLIIIDKLKGVAYTFKDGNLEVLVDSRGINQFVI</sequence>
<name>DABA_HYDS0</name>
<feature type="chain" id="PRO_0000387266" description="Probable inorganic carbon transporter subunit DabA">
    <location>
        <begin position="1"/>
        <end position="961"/>
    </location>
</feature>
<feature type="binding site" evidence="1">
    <location>
        <position position="406"/>
    </location>
    <ligand>
        <name>Zn(2+)</name>
        <dbReference type="ChEBI" id="CHEBI:29105"/>
    </ligand>
</feature>
<feature type="binding site" evidence="1">
    <location>
        <position position="408"/>
    </location>
    <ligand>
        <name>Zn(2+)</name>
        <dbReference type="ChEBI" id="CHEBI:29105"/>
    </ligand>
</feature>
<feature type="binding site" evidence="1">
    <location>
        <position position="653"/>
    </location>
    <ligand>
        <name>Zn(2+)</name>
        <dbReference type="ChEBI" id="CHEBI:29105"/>
    </ligand>
</feature>
<feature type="binding site" evidence="1">
    <location>
        <position position="668"/>
    </location>
    <ligand>
        <name>Zn(2+)</name>
        <dbReference type="ChEBI" id="CHEBI:29105"/>
    </ligand>
</feature>
<protein>
    <recommendedName>
        <fullName evidence="1">Probable inorganic carbon transporter subunit DabA</fullName>
    </recommendedName>
</protein>
<gene>
    <name evidence="1" type="primary">dabA</name>
    <name type="ordered locus">HY04AAS1_0547</name>
</gene>
<organism>
    <name type="scientific">Hydrogenobaculum sp. (strain Y04AAS1)</name>
    <dbReference type="NCBI Taxonomy" id="380749"/>
    <lineage>
        <taxon>Bacteria</taxon>
        <taxon>Pseudomonadati</taxon>
        <taxon>Aquificota</taxon>
        <taxon>Aquificia</taxon>
        <taxon>Aquificales</taxon>
        <taxon>Aquificaceae</taxon>
        <taxon>Hydrogenobaculum</taxon>
    </lineage>
</organism>
<proteinExistence type="inferred from homology"/>
<accession>B4U7X3</accession>
<comment type="function">
    <text evidence="1">Part of an energy-coupled inorganic carbon pump.</text>
</comment>
<comment type="cofactor">
    <cofactor evidence="1">
        <name>Zn(2+)</name>
        <dbReference type="ChEBI" id="CHEBI:29105"/>
    </cofactor>
</comment>
<comment type="subunit">
    <text evidence="1">Forms a complex with DabB.</text>
</comment>
<comment type="subcellular location">
    <subcellularLocation>
        <location evidence="1">Cell inner membrane</location>
        <topology evidence="1">Peripheral membrane protein</topology>
    </subcellularLocation>
</comment>
<comment type="similarity">
    <text evidence="1">Belongs to the inorganic carbon transporter (TC 9.A.2) DabA family.</text>
</comment>
<dbReference type="EMBL" id="CP001130">
    <property type="protein sequence ID" value="ACG57234.1"/>
    <property type="molecule type" value="Genomic_DNA"/>
</dbReference>
<dbReference type="RefSeq" id="WP_012513590.1">
    <property type="nucleotide sequence ID" value="NC_011126.1"/>
</dbReference>
<dbReference type="SMR" id="B4U7X3"/>
<dbReference type="STRING" id="380749.HY04AAS1_0547"/>
<dbReference type="KEGG" id="hya:HY04AAS1_0547"/>
<dbReference type="eggNOG" id="COG3002">
    <property type="taxonomic scope" value="Bacteria"/>
</dbReference>
<dbReference type="HOGENOM" id="CLU_009885_0_0_0"/>
<dbReference type="OrthoDB" id="9805101at2"/>
<dbReference type="GO" id="GO:0005886">
    <property type="term" value="C:plasma membrane"/>
    <property type="evidence" value="ECO:0007669"/>
    <property type="project" value="UniProtKB-SubCell"/>
</dbReference>
<dbReference type="GO" id="GO:0008270">
    <property type="term" value="F:zinc ion binding"/>
    <property type="evidence" value="ECO:0007669"/>
    <property type="project" value="UniProtKB-UniRule"/>
</dbReference>
<dbReference type="HAMAP" id="MF_01871">
    <property type="entry name" value="DabA"/>
    <property type="match status" value="1"/>
</dbReference>
<dbReference type="InterPro" id="IPR018752">
    <property type="entry name" value="DabA"/>
</dbReference>
<dbReference type="PANTHER" id="PTHR38344:SF1">
    <property type="entry name" value="INORGANIC CARBON TRANSPORTER SUBUNIT DABA-RELATED"/>
    <property type="match status" value="1"/>
</dbReference>
<dbReference type="PANTHER" id="PTHR38344">
    <property type="entry name" value="UPF0753 PROTEIN AQ_863"/>
    <property type="match status" value="1"/>
</dbReference>
<dbReference type="Pfam" id="PF10070">
    <property type="entry name" value="DabA"/>
    <property type="match status" value="1"/>
</dbReference>